<organism>
    <name type="scientific">Sus scrofa</name>
    <name type="common">Pig</name>
    <dbReference type="NCBI Taxonomy" id="9823"/>
    <lineage>
        <taxon>Eukaryota</taxon>
        <taxon>Metazoa</taxon>
        <taxon>Chordata</taxon>
        <taxon>Craniata</taxon>
        <taxon>Vertebrata</taxon>
        <taxon>Euteleostomi</taxon>
        <taxon>Mammalia</taxon>
        <taxon>Eutheria</taxon>
        <taxon>Laurasiatheria</taxon>
        <taxon>Artiodactyla</taxon>
        <taxon>Suina</taxon>
        <taxon>Suidae</taxon>
        <taxon>Sus</taxon>
    </lineage>
</organism>
<comment type="function">
    <text evidence="1">Replication termination factor which is a component of the elongating replisome. Required for ATR pathway signaling upon DNA damage and has a positive activity during DNA replication. Might function to facilitate fork pausing at replication fork barriers like the rDNA. May be globally required to stimulate ATR signaling after the fork stalls or encounters a lesion. Interacts with nascent DNA.</text>
</comment>
<comment type="subunit">
    <text evidence="1">Interacts with DDI2; probably also interacts with DDI1.</text>
</comment>
<comment type="subcellular location">
    <subcellularLocation>
        <location evidence="1">Chromosome</location>
    </subcellularLocation>
    <text evidence="1">Localizes at the replication fork.</text>
</comment>
<comment type="PTM">
    <text evidence="1">Undergoes proteasomal degradation, via DDI1 and DDI2. Removal from stalled replisomes and degradation are required for genome stability.</text>
</comment>
<comment type="similarity">
    <text evidence="3">Belongs to the rtf2 family.</text>
</comment>
<gene>
    <name type="primary">RTF2</name>
    <name type="synonym">RTFDC1</name>
</gene>
<accession>A5GFW7</accession>
<accession>A5GFW6</accession>
<sequence length="306" mass="33601">MGCDGGTIPKRHELVKGPKKVEKVDKDAELVAQWNYCTLSQEILRRPIVACELGRLYNKDAVIEFLLDKSSEKALGKAASHIKSIKNVTELRLSDNPAWEGDKGSTKGDKHDDLQRARFICPVVGLEMNGRHRFCYLRCCGCVFSERALKEIKAEVCHTCGAAFQEDDVIVLNGTKEDVAMLQTRMEERRLRAKLGKKTKKPKAAESVSKSDISEEAPGPSKMKAGKPEETSLDSREKKTSSAPRSAAAHGSSSGKAGKPVCGAPKRSIADSGESEAYKSLFTTHSSAKRSKEESAHWVTHTSYCF</sequence>
<proteinExistence type="inferred from homology"/>
<name>RTF2_PIG</name>
<dbReference type="EMBL" id="CR956640">
    <property type="protein sequence ID" value="CAN13140.1"/>
    <property type="molecule type" value="Genomic_DNA"/>
</dbReference>
<dbReference type="EMBL" id="CR956640">
    <property type="protein sequence ID" value="CAN13141.1"/>
    <property type="molecule type" value="Genomic_DNA"/>
</dbReference>
<dbReference type="RefSeq" id="NP_001103902.1">
    <property type="nucleotide sequence ID" value="NM_001110432.1"/>
</dbReference>
<dbReference type="RefSeq" id="XP_005673089.1">
    <property type="nucleotide sequence ID" value="XM_005673032.2"/>
</dbReference>
<dbReference type="FunCoup" id="A5GFW7">
    <property type="interactions" value="3133"/>
</dbReference>
<dbReference type="STRING" id="9823.ENSSSCP00000007988"/>
<dbReference type="PaxDb" id="9823-ENSSSCP00000007988"/>
<dbReference type="PeptideAtlas" id="A5GFW7"/>
<dbReference type="GeneID" id="100126294"/>
<dbReference type="KEGG" id="ssc:100126294"/>
<dbReference type="CTD" id="51507"/>
<dbReference type="eggNOG" id="KOG3113">
    <property type="taxonomic scope" value="Eukaryota"/>
</dbReference>
<dbReference type="HOGENOM" id="CLU_048955_1_0_1"/>
<dbReference type="InParanoid" id="A5GFW7"/>
<dbReference type="OMA" id="EFRWLHC"/>
<dbReference type="OrthoDB" id="247013at2759"/>
<dbReference type="TreeFam" id="TF314621"/>
<dbReference type="Proteomes" id="UP000008227">
    <property type="component" value="Unplaced"/>
</dbReference>
<dbReference type="Proteomes" id="UP000314985">
    <property type="component" value="Unplaced"/>
</dbReference>
<dbReference type="Proteomes" id="UP000694570">
    <property type="component" value="Unplaced"/>
</dbReference>
<dbReference type="Proteomes" id="UP000694571">
    <property type="component" value="Unplaced"/>
</dbReference>
<dbReference type="Proteomes" id="UP000694720">
    <property type="component" value="Unplaced"/>
</dbReference>
<dbReference type="Proteomes" id="UP000694722">
    <property type="component" value="Unplaced"/>
</dbReference>
<dbReference type="Proteomes" id="UP000694723">
    <property type="component" value="Unplaced"/>
</dbReference>
<dbReference type="Proteomes" id="UP000694724">
    <property type="component" value="Unplaced"/>
</dbReference>
<dbReference type="Proteomes" id="UP000694725">
    <property type="component" value="Unplaced"/>
</dbReference>
<dbReference type="Proteomes" id="UP000694726">
    <property type="component" value="Unplaced"/>
</dbReference>
<dbReference type="Proteomes" id="UP000694727">
    <property type="component" value="Unplaced"/>
</dbReference>
<dbReference type="Proteomes" id="UP000694728">
    <property type="component" value="Unplaced"/>
</dbReference>
<dbReference type="GO" id="GO:0005634">
    <property type="term" value="C:nucleus"/>
    <property type="evidence" value="ECO:0000318"/>
    <property type="project" value="GO_Central"/>
</dbReference>
<dbReference type="GO" id="GO:0005657">
    <property type="term" value="C:replication fork"/>
    <property type="evidence" value="ECO:0000250"/>
    <property type="project" value="UniProtKB"/>
</dbReference>
<dbReference type="GO" id="GO:0003677">
    <property type="term" value="F:DNA binding"/>
    <property type="evidence" value="ECO:0000250"/>
    <property type="project" value="UniProtKB"/>
</dbReference>
<dbReference type="GO" id="GO:0072711">
    <property type="term" value="P:cellular response to hydroxyurea"/>
    <property type="evidence" value="ECO:0000250"/>
    <property type="project" value="UniProtKB"/>
</dbReference>
<dbReference type="GO" id="GO:1902979">
    <property type="term" value="P:mitotic DNA replication termination"/>
    <property type="evidence" value="ECO:0007669"/>
    <property type="project" value="InterPro"/>
</dbReference>
<dbReference type="GO" id="GO:0097752">
    <property type="term" value="P:regulation of DNA stability"/>
    <property type="evidence" value="ECO:0000250"/>
    <property type="project" value="UniProtKB"/>
</dbReference>
<dbReference type="CDD" id="cd16653">
    <property type="entry name" value="RING-like_Rtf2"/>
    <property type="match status" value="1"/>
</dbReference>
<dbReference type="InterPro" id="IPR006735">
    <property type="entry name" value="Rtf2"/>
</dbReference>
<dbReference type="InterPro" id="IPR027799">
    <property type="entry name" value="Rtf2_RING-finger"/>
</dbReference>
<dbReference type="PANTHER" id="PTHR12775">
    <property type="entry name" value="PROTEIN C20ORF43 HOMOLOG"/>
    <property type="match status" value="1"/>
</dbReference>
<dbReference type="PANTHER" id="PTHR12775:SF0">
    <property type="entry name" value="REPLICATION TERMINATION FACTOR 2"/>
    <property type="match status" value="1"/>
</dbReference>
<dbReference type="Pfam" id="PF04641">
    <property type="entry name" value="Rtf2"/>
    <property type="match status" value="1"/>
</dbReference>
<evidence type="ECO:0000250" key="1">
    <source>
        <dbReference type="UniProtKB" id="Q9BY42"/>
    </source>
</evidence>
<evidence type="ECO:0000256" key="2">
    <source>
        <dbReference type="SAM" id="MobiDB-lite"/>
    </source>
</evidence>
<evidence type="ECO:0000305" key="3"/>
<feature type="chain" id="PRO_0000327237" description="Replication termination factor 2">
    <location>
        <begin position="1"/>
        <end position="306"/>
    </location>
</feature>
<feature type="region of interest" description="Disordered" evidence="2">
    <location>
        <begin position="192"/>
        <end position="306"/>
    </location>
</feature>
<feature type="compositionally biased region" description="Basic residues" evidence="2">
    <location>
        <begin position="192"/>
        <end position="202"/>
    </location>
</feature>
<feature type="compositionally biased region" description="Basic and acidic residues" evidence="2">
    <location>
        <begin position="226"/>
        <end position="240"/>
    </location>
</feature>
<feature type="compositionally biased region" description="Low complexity" evidence="2">
    <location>
        <begin position="241"/>
        <end position="258"/>
    </location>
</feature>
<feature type="modified residue" description="Phosphoserine" evidence="1">
    <location>
        <position position="287"/>
    </location>
</feature>
<feature type="sequence conflict" description="In Ref. 1; CAN13140." evidence="3" ref="1">
    <location>
        <position position="247"/>
    </location>
</feature>
<keyword id="KW-0158">Chromosome</keyword>
<keyword id="KW-0597">Phosphoprotein</keyword>
<keyword id="KW-1185">Reference proteome</keyword>
<reference key="1">
    <citation type="submission" date="2007-05" db="EMBL/GenBank/DDBJ databases">
        <authorList>
            <consortium name="Porcine genome sequencing project"/>
        </authorList>
    </citation>
    <scope>NUCLEOTIDE SEQUENCE [LARGE SCALE GENOMIC DNA]</scope>
</reference>
<protein>
    <recommendedName>
        <fullName evidence="3">Replication termination factor 2</fullName>
        <shortName>RTF2</shortName>
    </recommendedName>
    <alternativeName>
        <fullName>Replication termination factor 2 domain-containing protein 1</fullName>
    </alternativeName>
</protein>